<sequence length="238" mass="25415">MRPADRAAQQVRPLTLTRNYTKHAEGSVLVEFGDTKVLCTATVEEGVPRFLKGQGQGWITAEYGMLPRSTHSRNAREAAKGKQGGRTLEIQRLIARSLRAAVDLKKLGEFTITLDCDVLQADGGTRTASISGACVALADALNKLVASGKLKANPMKGLVAAVSVGIVKGEALCDLEYVEDSAAETDMNVVMMEDGRMIEVQGTAEGEPFSHEELLALLDLARGGIETIFQAQKAALES</sequence>
<comment type="function">
    <text evidence="1">Phosphorolytic 3'-5' exoribonuclease that plays an important role in tRNA 3'-end maturation. Removes nucleotide residues following the 3'-CCA terminus of tRNAs; can also add nucleotides to the ends of RNA molecules by using nucleoside diphosphates as substrates, but this may not be physiologically important. Probably plays a role in initiation of 16S rRNA degradation (leading to ribosome degradation) during starvation.</text>
</comment>
<comment type="catalytic activity">
    <reaction evidence="1">
        <text>tRNA(n+1) + phosphate = tRNA(n) + a ribonucleoside 5'-diphosphate</text>
        <dbReference type="Rhea" id="RHEA:10628"/>
        <dbReference type="Rhea" id="RHEA-COMP:17343"/>
        <dbReference type="Rhea" id="RHEA-COMP:17344"/>
        <dbReference type="ChEBI" id="CHEBI:43474"/>
        <dbReference type="ChEBI" id="CHEBI:57930"/>
        <dbReference type="ChEBI" id="CHEBI:173114"/>
        <dbReference type="EC" id="2.7.7.56"/>
    </reaction>
</comment>
<comment type="subunit">
    <text evidence="1">Homohexameric ring arranged as a trimer of dimers.</text>
</comment>
<comment type="similarity">
    <text evidence="1">Belongs to the RNase PH family.</text>
</comment>
<evidence type="ECO:0000255" key="1">
    <source>
        <dbReference type="HAMAP-Rule" id="MF_00564"/>
    </source>
</evidence>
<dbReference type="EC" id="2.7.7.56" evidence="1"/>
<dbReference type="EMBL" id="CP001048">
    <property type="protein sequence ID" value="ACC87042.1"/>
    <property type="molecule type" value="Genomic_DNA"/>
</dbReference>
<dbReference type="RefSeq" id="WP_002208997.1">
    <property type="nucleotide sequence ID" value="NZ_CP009780.1"/>
</dbReference>
<dbReference type="SMR" id="B2JYM8"/>
<dbReference type="GeneID" id="57974546"/>
<dbReference type="KEGG" id="ypb:YPTS_0043"/>
<dbReference type="PATRIC" id="fig|502801.10.peg.3719"/>
<dbReference type="GO" id="GO:0000175">
    <property type="term" value="F:3'-5'-RNA exonuclease activity"/>
    <property type="evidence" value="ECO:0007669"/>
    <property type="project" value="UniProtKB-UniRule"/>
</dbReference>
<dbReference type="GO" id="GO:0000049">
    <property type="term" value="F:tRNA binding"/>
    <property type="evidence" value="ECO:0007669"/>
    <property type="project" value="UniProtKB-UniRule"/>
</dbReference>
<dbReference type="GO" id="GO:0009022">
    <property type="term" value="F:tRNA nucleotidyltransferase activity"/>
    <property type="evidence" value="ECO:0007669"/>
    <property type="project" value="UniProtKB-UniRule"/>
</dbReference>
<dbReference type="GO" id="GO:0016075">
    <property type="term" value="P:rRNA catabolic process"/>
    <property type="evidence" value="ECO:0007669"/>
    <property type="project" value="UniProtKB-UniRule"/>
</dbReference>
<dbReference type="GO" id="GO:0006364">
    <property type="term" value="P:rRNA processing"/>
    <property type="evidence" value="ECO:0007669"/>
    <property type="project" value="UniProtKB-KW"/>
</dbReference>
<dbReference type="GO" id="GO:0008033">
    <property type="term" value="P:tRNA processing"/>
    <property type="evidence" value="ECO:0007669"/>
    <property type="project" value="UniProtKB-UniRule"/>
</dbReference>
<dbReference type="CDD" id="cd11362">
    <property type="entry name" value="RNase_PH_bact"/>
    <property type="match status" value="1"/>
</dbReference>
<dbReference type="FunFam" id="3.30.230.70:FF:000003">
    <property type="entry name" value="Ribonuclease PH"/>
    <property type="match status" value="1"/>
</dbReference>
<dbReference type="Gene3D" id="3.30.230.70">
    <property type="entry name" value="GHMP Kinase, N-terminal domain"/>
    <property type="match status" value="1"/>
</dbReference>
<dbReference type="HAMAP" id="MF_00564">
    <property type="entry name" value="RNase_PH"/>
    <property type="match status" value="1"/>
</dbReference>
<dbReference type="InterPro" id="IPR001247">
    <property type="entry name" value="ExoRNase_PH_dom1"/>
</dbReference>
<dbReference type="InterPro" id="IPR015847">
    <property type="entry name" value="ExoRNase_PH_dom2"/>
</dbReference>
<dbReference type="InterPro" id="IPR036345">
    <property type="entry name" value="ExoRNase_PH_dom2_sf"/>
</dbReference>
<dbReference type="InterPro" id="IPR027408">
    <property type="entry name" value="PNPase/RNase_PH_dom_sf"/>
</dbReference>
<dbReference type="InterPro" id="IPR020568">
    <property type="entry name" value="Ribosomal_Su5_D2-typ_SF"/>
</dbReference>
<dbReference type="InterPro" id="IPR050080">
    <property type="entry name" value="RNase_PH"/>
</dbReference>
<dbReference type="InterPro" id="IPR002381">
    <property type="entry name" value="RNase_PH_bac-type"/>
</dbReference>
<dbReference type="InterPro" id="IPR018336">
    <property type="entry name" value="RNase_PH_CS"/>
</dbReference>
<dbReference type="NCBIfam" id="TIGR01966">
    <property type="entry name" value="RNasePH"/>
    <property type="match status" value="1"/>
</dbReference>
<dbReference type="PANTHER" id="PTHR11953">
    <property type="entry name" value="EXOSOME COMPLEX COMPONENT"/>
    <property type="match status" value="1"/>
</dbReference>
<dbReference type="PANTHER" id="PTHR11953:SF0">
    <property type="entry name" value="EXOSOME COMPLEX COMPONENT RRP41"/>
    <property type="match status" value="1"/>
</dbReference>
<dbReference type="Pfam" id="PF01138">
    <property type="entry name" value="RNase_PH"/>
    <property type="match status" value="1"/>
</dbReference>
<dbReference type="Pfam" id="PF03725">
    <property type="entry name" value="RNase_PH_C"/>
    <property type="match status" value="1"/>
</dbReference>
<dbReference type="SUPFAM" id="SSF55666">
    <property type="entry name" value="Ribonuclease PH domain 2-like"/>
    <property type="match status" value="1"/>
</dbReference>
<dbReference type="SUPFAM" id="SSF54211">
    <property type="entry name" value="Ribosomal protein S5 domain 2-like"/>
    <property type="match status" value="1"/>
</dbReference>
<dbReference type="PROSITE" id="PS01277">
    <property type="entry name" value="RIBONUCLEASE_PH"/>
    <property type="match status" value="1"/>
</dbReference>
<reference key="1">
    <citation type="submission" date="2008-04" db="EMBL/GenBank/DDBJ databases">
        <title>Complete sequence of Yersinia pseudotuberculosis PB1/+.</title>
        <authorList>
            <person name="Copeland A."/>
            <person name="Lucas S."/>
            <person name="Lapidus A."/>
            <person name="Glavina del Rio T."/>
            <person name="Dalin E."/>
            <person name="Tice H."/>
            <person name="Bruce D."/>
            <person name="Goodwin L."/>
            <person name="Pitluck S."/>
            <person name="Munk A.C."/>
            <person name="Brettin T."/>
            <person name="Detter J.C."/>
            <person name="Han C."/>
            <person name="Tapia R."/>
            <person name="Schmutz J."/>
            <person name="Larimer F."/>
            <person name="Land M."/>
            <person name="Hauser L."/>
            <person name="Challacombe J.F."/>
            <person name="Green L."/>
            <person name="Lindler L.E."/>
            <person name="Nikolich M.P."/>
            <person name="Richardson P."/>
        </authorList>
    </citation>
    <scope>NUCLEOTIDE SEQUENCE [LARGE SCALE GENOMIC DNA]</scope>
    <source>
        <strain>PB1/+</strain>
    </source>
</reference>
<name>RNPH_YERPB</name>
<feature type="chain" id="PRO_1000129391" description="Ribonuclease PH">
    <location>
        <begin position="1"/>
        <end position="238"/>
    </location>
</feature>
<feature type="binding site" evidence="1">
    <location>
        <position position="86"/>
    </location>
    <ligand>
        <name>phosphate</name>
        <dbReference type="ChEBI" id="CHEBI:43474"/>
        <note>substrate</note>
    </ligand>
</feature>
<feature type="binding site" evidence="1">
    <location>
        <begin position="124"/>
        <end position="126"/>
    </location>
    <ligand>
        <name>phosphate</name>
        <dbReference type="ChEBI" id="CHEBI:43474"/>
        <note>substrate</note>
    </ligand>
</feature>
<accession>B2JYM8</accession>
<gene>
    <name evidence="1" type="primary">rph</name>
    <name type="ordered locus">YPTS_0043</name>
</gene>
<protein>
    <recommendedName>
        <fullName evidence="1">Ribonuclease PH</fullName>
        <shortName evidence="1">RNase PH</shortName>
        <ecNumber evidence="1">2.7.7.56</ecNumber>
    </recommendedName>
    <alternativeName>
        <fullName evidence="1">tRNA nucleotidyltransferase</fullName>
    </alternativeName>
</protein>
<organism>
    <name type="scientific">Yersinia pseudotuberculosis serotype IB (strain PB1/+)</name>
    <dbReference type="NCBI Taxonomy" id="502801"/>
    <lineage>
        <taxon>Bacteria</taxon>
        <taxon>Pseudomonadati</taxon>
        <taxon>Pseudomonadota</taxon>
        <taxon>Gammaproteobacteria</taxon>
        <taxon>Enterobacterales</taxon>
        <taxon>Yersiniaceae</taxon>
        <taxon>Yersinia</taxon>
    </lineage>
</organism>
<keyword id="KW-0548">Nucleotidyltransferase</keyword>
<keyword id="KW-0694">RNA-binding</keyword>
<keyword id="KW-0698">rRNA processing</keyword>
<keyword id="KW-0808">Transferase</keyword>
<keyword id="KW-0819">tRNA processing</keyword>
<keyword id="KW-0820">tRNA-binding</keyword>
<proteinExistence type="inferred from homology"/>